<keyword id="KW-0963">Cytoplasm</keyword>
<keyword id="KW-0489">Methyltransferase</keyword>
<keyword id="KW-1185">Reference proteome</keyword>
<keyword id="KW-0949">S-adenosyl-L-methionine</keyword>
<keyword id="KW-0808">Transferase</keyword>
<gene>
    <name evidence="1" type="primary">prmA</name>
    <name type="ordered locus">Asuc_0646</name>
</gene>
<protein>
    <recommendedName>
        <fullName evidence="1">Ribosomal protein L11 methyltransferase</fullName>
        <shortName evidence="1">L11 Mtase</shortName>
        <ecNumber evidence="1">2.1.1.-</ecNumber>
    </recommendedName>
</protein>
<name>PRMA_ACTSZ</name>
<feature type="chain" id="PRO_1000072789" description="Ribosomal protein L11 methyltransferase">
    <location>
        <begin position="1"/>
        <end position="293"/>
    </location>
</feature>
<feature type="binding site" evidence="1">
    <location>
        <position position="145"/>
    </location>
    <ligand>
        <name>S-adenosyl-L-methionine</name>
        <dbReference type="ChEBI" id="CHEBI:59789"/>
    </ligand>
</feature>
<feature type="binding site" evidence="1">
    <location>
        <position position="166"/>
    </location>
    <ligand>
        <name>S-adenosyl-L-methionine</name>
        <dbReference type="ChEBI" id="CHEBI:59789"/>
    </ligand>
</feature>
<feature type="binding site" evidence="1">
    <location>
        <position position="188"/>
    </location>
    <ligand>
        <name>S-adenosyl-L-methionine</name>
        <dbReference type="ChEBI" id="CHEBI:59789"/>
    </ligand>
</feature>
<feature type="binding site" evidence="1">
    <location>
        <position position="230"/>
    </location>
    <ligand>
        <name>S-adenosyl-L-methionine</name>
        <dbReference type="ChEBI" id="CHEBI:59789"/>
    </ligand>
</feature>
<sequence>MAWIQIRLNSTNERAEAISDFLEELGSVSVTFMDSQDTPIFEPLPGETRLWGNTDVIALFDAETEMQPVLTALRQSGLLEEGFAYKIEQIEDKDWEREWMDNFHPMQFGKRLWICPSWREIPDPNAVNVMLDPGLAFGTGTHPTTALCLEWLDGLDLTGKTVIDFGCGSGILAIAALKLGAKNAIGIDIDPQAILASGSNAQANGVADRLQLFLSDRQPADLKADVVVANILAGPLKELYPVISQLVKPKGDLGLSGILKTQAASVCEAYAQTFELEPVAVREEWCRITGKLA</sequence>
<dbReference type="EC" id="2.1.1.-" evidence="1"/>
<dbReference type="EMBL" id="CP000746">
    <property type="protein sequence ID" value="ABR74019.1"/>
    <property type="molecule type" value="Genomic_DNA"/>
</dbReference>
<dbReference type="RefSeq" id="WP_012072399.1">
    <property type="nucleotide sequence ID" value="NC_009655.1"/>
</dbReference>
<dbReference type="SMR" id="A6VM22"/>
<dbReference type="STRING" id="339671.Asuc_0646"/>
<dbReference type="KEGG" id="asu:Asuc_0646"/>
<dbReference type="eggNOG" id="COG2264">
    <property type="taxonomic scope" value="Bacteria"/>
</dbReference>
<dbReference type="HOGENOM" id="CLU_049382_4_1_6"/>
<dbReference type="OrthoDB" id="9785995at2"/>
<dbReference type="Proteomes" id="UP000001114">
    <property type="component" value="Chromosome"/>
</dbReference>
<dbReference type="GO" id="GO:0005829">
    <property type="term" value="C:cytosol"/>
    <property type="evidence" value="ECO:0007669"/>
    <property type="project" value="TreeGrafter"/>
</dbReference>
<dbReference type="GO" id="GO:0016279">
    <property type="term" value="F:protein-lysine N-methyltransferase activity"/>
    <property type="evidence" value="ECO:0007669"/>
    <property type="project" value="TreeGrafter"/>
</dbReference>
<dbReference type="GO" id="GO:0032259">
    <property type="term" value="P:methylation"/>
    <property type="evidence" value="ECO:0007669"/>
    <property type="project" value="UniProtKB-KW"/>
</dbReference>
<dbReference type="CDD" id="cd02440">
    <property type="entry name" value="AdoMet_MTases"/>
    <property type="match status" value="1"/>
</dbReference>
<dbReference type="Gene3D" id="3.40.50.150">
    <property type="entry name" value="Vaccinia Virus protein VP39"/>
    <property type="match status" value="1"/>
</dbReference>
<dbReference type="HAMAP" id="MF_00735">
    <property type="entry name" value="Methyltr_PrmA"/>
    <property type="match status" value="1"/>
</dbReference>
<dbReference type="InterPro" id="IPR050078">
    <property type="entry name" value="Ribosomal_L11_MeTrfase_PrmA"/>
</dbReference>
<dbReference type="InterPro" id="IPR004498">
    <property type="entry name" value="Ribosomal_PrmA_MeTrfase"/>
</dbReference>
<dbReference type="InterPro" id="IPR029063">
    <property type="entry name" value="SAM-dependent_MTases_sf"/>
</dbReference>
<dbReference type="NCBIfam" id="TIGR00406">
    <property type="entry name" value="prmA"/>
    <property type="match status" value="1"/>
</dbReference>
<dbReference type="PANTHER" id="PTHR43648">
    <property type="entry name" value="ELECTRON TRANSFER FLAVOPROTEIN BETA SUBUNIT LYSINE METHYLTRANSFERASE"/>
    <property type="match status" value="1"/>
</dbReference>
<dbReference type="PANTHER" id="PTHR43648:SF1">
    <property type="entry name" value="ELECTRON TRANSFER FLAVOPROTEIN BETA SUBUNIT LYSINE METHYLTRANSFERASE"/>
    <property type="match status" value="1"/>
</dbReference>
<dbReference type="Pfam" id="PF06325">
    <property type="entry name" value="PrmA"/>
    <property type="match status" value="1"/>
</dbReference>
<dbReference type="PIRSF" id="PIRSF000401">
    <property type="entry name" value="RPL11_MTase"/>
    <property type="match status" value="1"/>
</dbReference>
<dbReference type="SUPFAM" id="SSF53335">
    <property type="entry name" value="S-adenosyl-L-methionine-dependent methyltransferases"/>
    <property type="match status" value="1"/>
</dbReference>
<comment type="function">
    <text evidence="1">Methylates ribosomal protein L11.</text>
</comment>
<comment type="catalytic activity">
    <reaction evidence="1">
        <text>L-lysyl-[protein] + 3 S-adenosyl-L-methionine = N(6),N(6),N(6)-trimethyl-L-lysyl-[protein] + 3 S-adenosyl-L-homocysteine + 3 H(+)</text>
        <dbReference type="Rhea" id="RHEA:54192"/>
        <dbReference type="Rhea" id="RHEA-COMP:9752"/>
        <dbReference type="Rhea" id="RHEA-COMP:13826"/>
        <dbReference type="ChEBI" id="CHEBI:15378"/>
        <dbReference type="ChEBI" id="CHEBI:29969"/>
        <dbReference type="ChEBI" id="CHEBI:57856"/>
        <dbReference type="ChEBI" id="CHEBI:59789"/>
        <dbReference type="ChEBI" id="CHEBI:61961"/>
    </reaction>
</comment>
<comment type="subcellular location">
    <subcellularLocation>
        <location evidence="1">Cytoplasm</location>
    </subcellularLocation>
</comment>
<comment type="similarity">
    <text evidence="1">Belongs to the methyltransferase superfamily. PrmA family.</text>
</comment>
<accession>A6VM22</accession>
<organism>
    <name type="scientific">Actinobacillus succinogenes (strain ATCC 55618 / DSM 22257 / CCUG 43843 / 130Z)</name>
    <dbReference type="NCBI Taxonomy" id="339671"/>
    <lineage>
        <taxon>Bacteria</taxon>
        <taxon>Pseudomonadati</taxon>
        <taxon>Pseudomonadota</taxon>
        <taxon>Gammaproteobacteria</taxon>
        <taxon>Pasteurellales</taxon>
        <taxon>Pasteurellaceae</taxon>
        <taxon>Actinobacillus</taxon>
    </lineage>
</organism>
<evidence type="ECO:0000255" key="1">
    <source>
        <dbReference type="HAMAP-Rule" id="MF_00735"/>
    </source>
</evidence>
<proteinExistence type="inferred from homology"/>
<reference key="1">
    <citation type="journal article" date="2010" name="BMC Genomics">
        <title>A genomic perspective on the potential of Actinobacillus succinogenes for industrial succinate production.</title>
        <authorList>
            <person name="McKinlay J.B."/>
            <person name="Laivenieks M."/>
            <person name="Schindler B.D."/>
            <person name="McKinlay A.A."/>
            <person name="Siddaramappa S."/>
            <person name="Challacombe J.F."/>
            <person name="Lowry S.R."/>
            <person name="Clum A."/>
            <person name="Lapidus A.L."/>
            <person name="Burkhart K.B."/>
            <person name="Harkins V."/>
            <person name="Vieille C."/>
        </authorList>
    </citation>
    <scope>NUCLEOTIDE SEQUENCE [LARGE SCALE GENOMIC DNA]</scope>
    <source>
        <strain>ATCC 55618 / DSM 22257 / CCUG 43843 / 130Z</strain>
    </source>
</reference>